<protein>
    <recommendedName>
        <fullName>Cytochrome P450 1A2</fullName>
        <ecNumber evidence="2">1.14.14.1</ecNumber>
    </recommendedName>
    <alternativeName>
        <fullName>CYPIA2</fullName>
    </alternativeName>
    <alternativeName>
        <fullName evidence="2">Cholesterol 25-hydroxylase</fullName>
    </alternativeName>
    <alternativeName>
        <fullName>Hydroperoxy icosatetraenoate dehydratase</fullName>
        <ecNumber evidence="2">4.2.1.152</ecNumber>
    </alternativeName>
</protein>
<reference key="1">
    <citation type="journal article" date="1997" name="Carcinogenesis">
        <title>Marmoset CYP1A2: primary structure and constitutive expression in livers.</title>
        <authorList>
            <person name="Sakuma T."/>
            <person name="Igarashi T."/>
            <person name="Hieda M."/>
            <person name="Ohgiya S."/>
            <person name="Isogai M."/>
            <person name="Ninomiya S."/>
            <person name="Nagata R."/>
            <person name="Nemoto N."/>
            <person name="Kamataki T."/>
        </authorList>
    </citation>
    <scope>NUCLEOTIDE SEQUENCE [MRNA]</scope>
    <source>
        <tissue>Liver</tissue>
    </source>
</reference>
<proteinExistence type="evidence at transcript level"/>
<name>CP1A2_CALJA</name>
<organism>
    <name type="scientific">Callithrix jacchus</name>
    <name type="common">White-tufted-ear marmoset</name>
    <dbReference type="NCBI Taxonomy" id="9483"/>
    <lineage>
        <taxon>Eukaryota</taxon>
        <taxon>Metazoa</taxon>
        <taxon>Chordata</taxon>
        <taxon>Craniata</taxon>
        <taxon>Vertebrata</taxon>
        <taxon>Euteleostomi</taxon>
        <taxon>Mammalia</taxon>
        <taxon>Eutheria</taxon>
        <taxon>Euarchontoglires</taxon>
        <taxon>Primates</taxon>
        <taxon>Haplorrhini</taxon>
        <taxon>Platyrrhini</taxon>
        <taxon>Cebidae</taxon>
        <taxon>Callitrichinae</taxon>
        <taxon>Callithrix</taxon>
        <taxon>Callithrix</taxon>
    </lineage>
</organism>
<accession>O77810</accession>
<feature type="chain" id="PRO_0000232907" description="Cytochrome P450 1A2">
    <location>
        <begin position="1"/>
        <end position="516"/>
    </location>
</feature>
<feature type="binding site" evidence="1">
    <location>
        <position position="226"/>
    </location>
    <ligand>
        <name>substrate</name>
    </ligand>
</feature>
<feature type="binding site" description="axial binding residue" evidence="1">
    <location>
        <position position="458"/>
    </location>
    <ligand>
        <name>heme</name>
        <dbReference type="ChEBI" id="CHEBI:30413"/>
    </ligand>
    <ligandPart>
        <name>Fe</name>
        <dbReference type="ChEBI" id="CHEBI:18248"/>
    </ligandPart>
</feature>
<feature type="glycosylation site" description="O-linked (GlcNAc) serine" evidence="1">
    <location>
        <position position="69"/>
    </location>
</feature>
<comment type="function">
    <text evidence="2">A cytochrome P450 monooxygenase involved in the metabolism of various endogenous substrates, including fatty acids, steroid hormones and vitamins. Mechanistically, uses molecular oxygen inserting one oxygen atom into a substrate, and reducing the second into a water molecule, with two electrons provided by NADPH via cytochrome P450 reductase (NADPH--hemoprotein reductase). Catalyzes the hydroxylation of carbon-hydrogen bonds. Exhibits high catalytic activity for the formation of hydroxyestrogens from estrone (E1) and 17beta-estradiol (E2), namely 2-hydroxy E1 and E2. Metabolizes cholesterol toward 25-hydroxycholesterol, a physiological regulator of cellular cholesterol homeostasis. May act as a major enzyme for all-trans retinoic acid biosynthesis in the liver. Catalyzes two successive oxidative transformation of all-trans retinol to all-trans retinal and then to the active form all-trans retinoic acid. Primarily catalyzes stereoselective epoxidation of the last double bond of polyunsaturated fatty acids (PUFA), displaying a strong preference for the (R,S) stereoisomer. Catalyzes bisallylic hydroxylation and omega-1 hydroxylation of PUFA. May also participate in eicosanoids metabolism by converting hydroperoxide species into oxo metabolites (lipoxygenase-like reaction, NADPH-independent). Plays a role in the oxidative metabolism of xenobiotics. Catalyzes the N-hydroxylation of heterocyclic amines and the O-deethylation of phenacetin. Metabolizes caffeine via N3-demethylation.</text>
</comment>
<comment type="catalytic activity">
    <reaction evidence="2">
        <text>an organic molecule + reduced [NADPH--hemoprotein reductase] + O2 = an alcohol + oxidized [NADPH--hemoprotein reductase] + H2O + H(+)</text>
        <dbReference type="Rhea" id="RHEA:17149"/>
        <dbReference type="Rhea" id="RHEA-COMP:11964"/>
        <dbReference type="Rhea" id="RHEA-COMP:11965"/>
        <dbReference type="ChEBI" id="CHEBI:15377"/>
        <dbReference type="ChEBI" id="CHEBI:15378"/>
        <dbReference type="ChEBI" id="CHEBI:15379"/>
        <dbReference type="ChEBI" id="CHEBI:30879"/>
        <dbReference type="ChEBI" id="CHEBI:57618"/>
        <dbReference type="ChEBI" id="CHEBI:58210"/>
        <dbReference type="ChEBI" id="CHEBI:142491"/>
        <dbReference type="EC" id="1.14.14.1"/>
    </reaction>
    <physiologicalReaction direction="left-to-right" evidence="2">
        <dbReference type="Rhea" id="RHEA:17150"/>
    </physiologicalReaction>
</comment>
<comment type="catalytic activity">
    <reaction evidence="2">
        <text>17beta-estradiol + reduced [NADPH--hemoprotein reductase] + O2 = 2-hydroxy-17beta-estradiol + oxidized [NADPH--hemoprotein reductase] + H2O + H(+)</text>
        <dbReference type="Rhea" id="RHEA:47212"/>
        <dbReference type="Rhea" id="RHEA-COMP:11964"/>
        <dbReference type="Rhea" id="RHEA-COMP:11965"/>
        <dbReference type="ChEBI" id="CHEBI:15377"/>
        <dbReference type="ChEBI" id="CHEBI:15378"/>
        <dbReference type="ChEBI" id="CHEBI:15379"/>
        <dbReference type="ChEBI" id="CHEBI:16469"/>
        <dbReference type="ChEBI" id="CHEBI:28744"/>
        <dbReference type="ChEBI" id="CHEBI:57618"/>
        <dbReference type="ChEBI" id="CHEBI:58210"/>
    </reaction>
    <physiologicalReaction direction="left-to-right" evidence="2">
        <dbReference type="Rhea" id="RHEA:47213"/>
    </physiologicalReaction>
</comment>
<comment type="catalytic activity">
    <reaction evidence="2">
        <text>17beta-estradiol + reduced [NADPH--hemoprotein reductase] + O2 = 4-hydroxy-17beta-estradiol + oxidized [NADPH--hemoprotein reductase] + H2O + H(+)</text>
        <dbReference type="Rhea" id="RHEA:47280"/>
        <dbReference type="Rhea" id="RHEA-COMP:11964"/>
        <dbReference type="Rhea" id="RHEA-COMP:11965"/>
        <dbReference type="ChEBI" id="CHEBI:15377"/>
        <dbReference type="ChEBI" id="CHEBI:15378"/>
        <dbReference type="ChEBI" id="CHEBI:15379"/>
        <dbReference type="ChEBI" id="CHEBI:16469"/>
        <dbReference type="ChEBI" id="CHEBI:57618"/>
        <dbReference type="ChEBI" id="CHEBI:58210"/>
        <dbReference type="ChEBI" id="CHEBI:62845"/>
    </reaction>
    <physiologicalReaction direction="left-to-right" evidence="2">
        <dbReference type="Rhea" id="RHEA:47281"/>
    </physiologicalReaction>
</comment>
<comment type="catalytic activity">
    <reaction evidence="2">
        <text>estrone + reduced [NADPH--hemoprotein reductase] + O2 = 2-hydroxyestrone + oxidized [NADPH--hemoprotein reductase] + H2O + H(+)</text>
        <dbReference type="Rhea" id="RHEA:47208"/>
        <dbReference type="Rhea" id="RHEA-COMP:11964"/>
        <dbReference type="Rhea" id="RHEA-COMP:11965"/>
        <dbReference type="ChEBI" id="CHEBI:1156"/>
        <dbReference type="ChEBI" id="CHEBI:15377"/>
        <dbReference type="ChEBI" id="CHEBI:15378"/>
        <dbReference type="ChEBI" id="CHEBI:15379"/>
        <dbReference type="ChEBI" id="CHEBI:17263"/>
        <dbReference type="ChEBI" id="CHEBI:57618"/>
        <dbReference type="ChEBI" id="CHEBI:58210"/>
    </reaction>
    <physiologicalReaction direction="left-to-right" evidence="2">
        <dbReference type="Rhea" id="RHEA:47209"/>
    </physiologicalReaction>
</comment>
<comment type="catalytic activity">
    <reaction evidence="2">
        <text>estrone + reduced [NADPH--hemoprotein reductase] + O2 = 4-hydroxyestrone + oxidized [NADPH--hemoprotein reductase] + H2O + H(+)</text>
        <dbReference type="Rhea" id="RHEA:47292"/>
        <dbReference type="Rhea" id="RHEA-COMP:11964"/>
        <dbReference type="Rhea" id="RHEA-COMP:11965"/>
        <dbReference type="ChEBI" id="CHEBI:15377"/>
        <dbReference type="ChEBI" id="CHEBI:15378"/>
        <dbReference type="ChEBI" id="CHEBI:15379"/>
        <dbReference type="ChEBI" id="CHEBI:17263"/>
        <dbReference type="ChEBI" id="CHEBI:57618"/>
        <dbReference type="ChEBI" id="CHEBI:58210"/>
        <dbReference type="ChEBI" id="CHEBI:87602"/>
    </reaction>
    <physiologicalReaction direction="left-to-right" evidence="2">
        <dbReference type="Rhea" id="RHEA:47293"/>
    </physiologicalReaction>
</comment>
<comment type="catalytic activity">
    <reaction evidence="2">
        <text>cholesterol + reduced [NADPH--hemoprotein reductase] + O2 = 25-hydroxycholesterol + oxidized [NADPH--hemoprotein reductase] + H2O + H(+)</text>
        <dbReference type="Rhea" id="RHEA:50256"/>
        <dbReference type="Rhea" id="RHEA-COMP:11964"/>
        <dbReference type="Rhea" id="RHEA-COMP:11965"/>
        <dbReference type="ChEBI" id="CHEBI:15377"/>
        <dbReference type="ChEBI" id="CHEBI:15378"/>
        <dbReference type="ChEBI" id="CHEBI:15379"/>
        <dbReference type="ChEBI" id="CHEBI:16113"/>
        <dbReference type="ChEBI" id="CHEBI:42977"/>
        <dbReference type="ChEBI" id="CHEBI:57618"/>
        <dbReference type="ChEBI" id="CHEBI:58210"/>
    </reaction>
    <physiologicalReaction direction="left-to-right" evidence="2">
        <dbReference type="Rhea" id="RHEA:50257"/>
    </physiologicalReaction>
</comment>
<comment type="catalytic activity">
    <reaction evidence="2">
        <text>all-trans-retinol + reduced [NADPH--hemoprotein reductase] + O2 = all-trans-retinal + oxidized [NADPH--hemoprotein reductase] + 2 H2O + H(+)</text>
        <dbReference type="Rhea" id="RHEA:42092"/>
        <dbReference type="Rhea" id="RHEA-COMP:11964"/>
        <dbReference type="Rhea" id="RHEA-COMP:11965"/>
        <dbReference type="ChEBI" id="CHEBI:15377"/>
        <dbReference type="ChEBI" id="CHEBI:15378"/>
        <dbReference type="ChEBI" id="CHEBI:15379"/>
        <dbReference type="ChEBI" id="CHEBI:17336"/>
        <dbReference type="ChEBI" id="CHEBI:17898"/>
        <dbReference type="ChEBI" id="CHEBI:57618"/>
        <dbReference type="ChEBI" id="CHEBI:58210"/>
    </reaction>
    <physiologicalReaction direction="left-to-right" evidence="2">
        <dbReference type="Rhea" id="RHEA:42093"/>
    </physiologicalReaction>
</comment>
<comment type="catalytic activity">
    <reaction evidence="2">
        <text>all-trans-retinal + reduced [NADPH--hemoprotein reductase] + O2 = all-trans-retinoate + oxidized [NADPH--hemoprotein reductase] + H2O + 2 H(+)</text>
        <dbReference type="Rhea" id="RHEA:42088"/>
        <dbReference type="Rhea" id="RHEA-COMP:11964"/>
        <dbReference type="Rhea" id="RHEA-COMP:11965"/>
        <dbReference type="ChEBI" id="CHEBI:15377"/>
        <dbReference type="ChEBI" id="CHEBI:15378"/>
        <dbReference type="ChEBI" id="CHEBI:15379"/>
        <dbReference type="ChEBI" id="CHEBI:17898"/>
        <dbReference type="ChEBI" id="CHEBI:35291"/>
        <dbReference type="ChEBI" id="CHEBI:57618"/>
        <dbReference type="ChEBI" id="CHEBI:58210"/>
    </reaction>
    <physiologicalReaction direction="left-to-right" evidence="2">
        <dbReference type="Rhea" id="RHEA:42089"/>
    </physiologicalReaction>
</comment>
<comment type="catalytic activity">
    <reaction evidence="2">
        <text>(5Z,8Z,11Z,14Z)-eicosatetraenoate + reduced [NADPH--hemoprotein reductase] + O2 = (14R,15S)-epoxy-(5Z,8Z,11Z)-eicosatrienoate + oxidized [NADPH--hemoprotein reductase] + H2O + H(+)</text>
        <dbReference type="Rhea" id="RHEA:49860"/>
        <dbReference type="Rhea" id="RHEA-COMP:11964"/>
        <dbReference type="Rhea" id="RHEA-COMP:11965"/>
        <dbReference type="ChEBI" id="CHEBI:15377"/>
        <dbReference type="ChEBI" id="CHEBI:15378"/>
        <dbReference type="ChEBI" id="CHEBI:15379"/>
        <dbReference type="ChEBI" id="CHEBI:32395"/>
        <dbReference type="ChEBI" id="CHEBI:57618"/>
        <dbReference type="ChEBI" id="CHEBI:58210"/>
        <dbReference type="ChEBI" id="CHEBI:131965"/>
    </reaction>
    <physiologicalReaction direction="left-to-right" evidence="2">
        <dbReference type="Rhea" id="RHEA:49861"/>
    </physiologicalReaction>
</comment>
<comment type="catalytic activity">
    <reaction evidence="2">
        <text>(5Z,8Z,11Z,14Z)-eicosatetraenoate + reduced [NADPH--hemoprotein reductase] + O2 = (14S,15R)-epoxy-(5Z,8Z,11Z)-eicosatrienoate + oxidized [NADPH--hemoprotein reductase] + H2O + H(+)</text>
        <dbReference type="Rhea" id="RHEA:49856"/>
        <dbReference type="Rhea" id="RHEA-COMP:11964"/>
        <dbReference type="Rhea" id="RHEA-COMP:11965"/>
        <dbReference type="ChEBI" id="CHEBI:15377"/>
        <dbReference type="ChEBI" id="CHEBI:15378"/>
        <dbReference type="ChEBI" id="CHEBI:15379"/>
        <dbReference type="ChEBI" id="CHEBI:32395"/>
        <dbReference type="ChEBI" id="CHEBI:57618"/>
        <dbReference type="ChEBI" id="CHEBI:58210"/>
        <dbReference type="ChEBI" id="CHEBI:131964"/>
    </reaction>
    <physiologicalReaction direction="left-to-right" evidence="2">
        <dbReference type="Rhea" id="RHEA:49857"/>
    </physiologicalReaction>
</comment>
<comment type="catalytic activity">
    <reaction evidence="2">
        <text>(5Z,8Z,11Z,14Z,17Z)-eicosapentaenoate + reduced [NADPH--hemoprotein reductase] + O2 = (17R,18S)-epoxy-(5Z,8Z,11Z,14Z)-eicosatetraenoate + oxidized [NADPH--hemoprotein reductase] + H2O + H(+)</text>
        <dbReference type="Rhea" id="RHEA:39779"/>
        <dbReference type="Rhea" id="RHEA-COMP:11964"/>
        <dbReference type="Rhea" id="RHEA-COMP:11965"/>
        <dbReference type="ChEBI" id="CHEBI:15377"/>
        <dbReference type="ChEBI" id="CHEBI:15378"/>
        <dbReference type="ChEBI" id="CHEBI:15379"/>
        <dbReference type="ChEBI" id="CHEBI:57618"/>
        <dbReference type="ChEBI" id="CHEBI:58210"/>
        <dbReference type="ChEBI" id="CHEBI:58562"/>
        <dbReference type="ChEBI" id="CHEBI:76634"/>
    </reaction>
    <physiologicalReaction direction="left-to-right" evidence="2">
        <dbReference type="Rhea" id="RHEA:39780"/>
    </physiologicalReaction>
</comment>
<comment type="catalytic activity">
    <reaction evidence="2">
        <text>(4Z,7Z,10Z,13Z,16Z,19Z)-docosahexaenoate + reduced [NADPH--hemoprotein reductase] + O2 = (19R,20S)-epoxy-(4Z,7Z,10Z,13Z,16Z)-docosapentaenoate + oxidized [NADPH--hemoprotein reductase] + H2O + H(+)</text>
        <dbReference type="Rhea" id="RHEA:52120"/>
        <dbReference type="Rhea" id="RHEA-COMP:11964"/>
        <dbReference type="Rhea" id="RHEA-COMP:11965"/>
        <dbReference type="ChEBI" id="CHEBI:15377"/>
        <dbReference type="ChEBI" id="CHEBI:15378"/>
        <dbReference type="ChEBI" id="CHEBI:15379"/>
        <dbReference type="ChEBI" id="CHEBI:57618"/>
        <dbReference type="ChEBI" id="CHEBI:58210"/>
        <dbReference type="ChEBI" id="CHEBI:77016"/>
        <dbReference type="ChEBI" id="CHEBI:136410"/>
    </reaction>
    <physiologicalReaction direction="left-to-right" evidence="2">
        <dbReference type="Rhea" id="RHEA:52121"/>
    </physiologicalReaction>
</comment>
<comment type="catalytic activity">
    <reaction evidence="2">
        <text>(5S)-hydroperoxy-(6E,8Z,11Z,14Z)-eicosatetraenoate = 5-oxo-(6E,8Z,11Z,14Z)-eicosatetraenoate + H2O</text>
        <dbReference type="Rhea" id="RHEA:48632"/>
        <dbReference type="ChEBI" id="CHEBI:15377"/>
        <dbReference type="ChEBI" id="CHEBI:57450"/>
        <dbReference type="ChEBI" id="CHEBI:65342"/>
    </reaction>
    <physiologicalReaction direction="left-to-right" evidence="2">
        <dbReference type="Rhea" id="RHEA:48633"/>
    </physiologicalReaction>
</comment>
<comment type="catalytic activity">
    <reaction evidence="2">
        <text>(12S)-hydroperoxy-(5Z,8Z,10E,14Z)-eicosatetraenoate = 12-oxo-(5Z,8Z,10E,14Z)-eicosatetraenoate + H2O</text>
        <dbReference type="Rhea" id="RHEA:37947"/>
        <dbReference type="ChEBI" id="CHEBI:15377"/>
        <dbReference type="ChEBI" id="CHEBI:57444"/>
        <dbReference type="ChEBI" id="CHEBI:75231"/>
        <dbReference type="EC" id="4.2.1.152"/>
    </reaction>
    <physiologicalReaction direction="left-to-right" evidence="2">
        <dbReference type="Rhea" id="RHEA:37948"/>
    </physiologicalReaction>
</comment>
<comment type="catalytic activity">
    <reaction evidence="2">
        <text>(15S)-hydroperoxy-(5Z,8Z,11Z,13E)-eicosatetraenoate = 15-oxo-(5Z,8Z,11Z,13E)-eicosatetraenoate + H2O</text>
        <dbReference type="Rhea" id="RHEA:48636"/>
        <dbReference type="ChEBI" id="CHEBI:15377"/>
        <dbReference type="ChEBI" id="CHEBI:57410"/>
        <dbReference type="ChEBI" id="CHEBI:57446"/>
    </reaction>
    <physiologicalReaction direction="left-to-right" evidence="2">
        <dbReference type="Rhea" id="RHEA:48637"/>
    </physiologicalReaction>
</comment>
<comment type="catalytic activity">
    <reaction evidence="2">
        <text>(13S)-hydroperoxy-(9Z,11E)-octadecadienoate = 13-oxo-(9Z,11E)-octadecadienoate + H2O</text>
        <dbReference type="Rhea" id="RHEA:48716"/>
        <dbReference type="ChEBI" id="CHEBI:15377"/>
        <dbReference type="ChEBI" id="CHEBI:57466"/>
        <dbReference type="ChEBI" id="CHEBI:90781"/>
    </reaction>
    <physiologicalReaction direction="left-to-right" evidence="2">
        <dbReference type="Rhea" id="RHEA:48717"/>
    </physiologicalReaction>
</comment>
<comment type="catalytic activity">
    <reaction evidence="2">
        <text>(5Z,8Z,11Z,14Z)-eicosatetraenoate + reduced [NADPH--hemoprotein reductase] + O2 = 13-hydroxy-(5Z,8Z,11Z,14Z)-eicosatetraenoate + oxidized [NADPH--hemoprotein reductase] + H2O + H(+)</text>
        <dbReference type="Rhea" id="RHEA:52292"/>
        <dbReference type="Rhea" id="RHEA-COMP:11964"/>
        <dbReference type="Rhea" id="RHEA-COMP:11965"/>
        <dbReference type="ChEBI" id="CHEBI:15377"/>
        <dbReference type="ChEBI" id="CHEBI:15378"/>
        <dbReference type="ChEBI" id="CHEBI:15379"/>
        <dbReference type="ChEBI" id="CHEBI:32395"/>
        <dbReference type="ChEBI" id="CHEBI:57618"/>
        <dbReference type="ChEBI" id="CHEBI:58210"/>
        <dbReference type="ChEBI" id="CHEBI:136524"/>
    </reaction>
    <physiologicalReaction direction="left-to-right" evidence="2">
        <dbReference type="Rhea" id="RHEA:52293"/>
    </physiologicalReaction>
</comment>
<comment type="catalytic activity">
    <reaction evidence="2">
        <text>(5Z,8Z,11Z,14Z)-eicosatetraenoate + reduced [NADPH--hemoprotein reductase] + O2 = 19-hydroxy-(5Z,8Z,11Z,14Z)-eicosatetraenoate + oxidized [NADPH--hemoprotein reductase] + H2O + H(+)</text>
        <dbReference type="Rhea" id="RHEA:39759"/>
        <dbReference type="Rhea" id="RHEA-COMP:11964"/>
        <dbReference type="Rhea" id="RHEA-COMP:11965"/>
        <dbReference type="ChEBI" id="CHEBI:15377"/>
        <dbReference type="ChEBI" id="CHEBI:15378"/>
        <dbReference type="ChEBI" id="CHEBI:15379"/>
        <dbReference type="ChEBI" id="CHEBI:32395"/>
        <dbReference type="ChEBI" id="CHEBI:57618"/>
        <dbReference type="ChEBI" id="CHEBI:58210"/>
        <dbReference type="ChEBI" id="CHEBI:76627"/>
    </reaction>
    <physiologicalReaction direction="left-to-right" evidence="2">
        <dbReference type="Rhea" id="RHEA:39760"/>
    </physiologicalReaction>
</comment>
<comment type="catalytic activity">
    <reaction evidence="2">
        <text>(9Z,12Z)-octadecadienoate + reduced [NADPH--hemoprotein reductase] + O2 = 11-hydroxy-(9Z,12Z)-octadecadienoate + oxidized [NADPH--hemoprotein reductase] + H2O + H(+)</text>
        <dbReference type="Rhea" id="RHEA:52284"/>
        <dbReference type="Rhea" id="RHEA-COMP:11964"/>
        <dbReference type="Rhea" id="RHEA-COMP:11965"/>
        <dbReference type="ChEBI" id="CHEBI:15377"/>
        <dbReference type="ChEBI" id="CHEBI:15378"/>
        <dbReference type="ChEBI" id="CHEBI:15379"/>
        <dbReference type="ChEBI" id="CHEBI:30245"/>
        <dbReference type="ChEBI" id="CHEBI:57618"/>
        <dbReference type="ChEBI" id="CHEBI:58210"/>
        <dbReference type="ChEBI" id="CHEBI:136522"/>
    </reaction>
    <physiologicalReaction direction="left-to-right" evidence="2">
        <dbReference type="Rhea" id="RHEA:52285"/>
    </physiologicalReaction>
</comment>
<comment type="cofactor">
    <cofactor evidence="1">
        <name>heme</name>
        <dbReference type="ChEBI" id="CHEBI:30413"/>
    </cofactor>
</comment>
<comment type="pathway">
    <text evidence="2">Cofactor metabolism; retinol metabolism.</text>
</comment>
<comment type="pathway">
    <text evidence="2">Steroid metabolism; cholesterol metabolism.</text>
</comment>
<comment type="pathway">
    <text evidence="2">Lipid metabolism; arachidonate metabolism.</text>
</comment>
<comment type="subunit">
    <text evidence="2">Interacts with PGRMC1; the interaction requires PGRMC1 homodimerization.</text>
</comment>
<comment type="subcellular location">
    <subcellularLocation>
        <location evidence="2">Endoplasmic reticulum membrane</location>
        <topology evidence="2">Peripheral membrane protein</topology>
    </subcellularLocation>
    <subcellularLocation>
        <location evidence="2">Microsome membrane</location>
        <topology evidence="2">Peripheral membrane protein</topology>
    </subcellularLocation>
</comment>
<comment type="similarity">
    <text evidence="3">Belongs to the cytochrome P450 family.</text>
</comment>
<sequence length="516" mass="58407">MALSQFVPFSATELLLTSTVFCLVFWVFKGLRPRVPKGLKSPPEPWRWPLLGHVLTLGKNPHLALTKMSQRYGDVLQIHIGSTPVVVLSGLDTIRQALVRQGDDFKGRPDLYSFTLITDGQSMSFSPDSGPVWAARRRLAQNALNTFSIASDPASSSSCYLEEHVSKEAEALIGRLQELMAGPGRFDPYNQIVESVVKVIGAMCFGQHFPESSDEMLSLMKNSHVFVENATSGNPVDFFPILRYLPNPALQRFKAFNQRFLRFLRETVQEHYQDSDKNSVQDITGALFKHCEKRSGASGDLIPQEKIVNLVNDIFGAGFDTITTAISWSLMYLVTKPEIQRKIQKELDTVIGRGRRPRLSDRPQLPYLEAFILETFRHSSFVPFTIPHSTTRDTTLKGFYIPKECCVFINQWQVNHDPQLWGDPSEFRPERFLTAKGTALNKPLSEKILLFGLGKRRCIGEVLGKWEVFLFLAILLQQLEFSVPPGVQIDLTPTYGLTMKHARCEHVQARLRFSFQ</sequence>
<keyword id="KW-0256">Endoplasmic reticulum</keyword>
<keyword id="KW-0276">Fatty acid metabolism</keyword>
<keyword id="KW-0325">Glycoprotein</keyword>
<keyword id="KW-0349">Heme</keyword>
<keyword id="KW-0408">Iron</keyword>
<keyword id="KW-0443">Lipid metabolism</keyword>
<keyword id="KW-0456">Lyase</keyword>
<keyword id="KW-0472">Membrane</keyword>
<keyword id="KW-0479">Metal-binding</keyword>
<keyword id="KW-0492">Microsome</keyword>
<keyword id="KW-0503">Monooxygenase</keyword>
<keyword id="KW-0560">Oxidoreductase</keyword>
<keyword id="KW-1185">Reference proteome</keyword>
<keyword id="KW-0753">Steroid metabolism</keyword>
<keyword id="KW-1207">Sterol metabolism</keyword>
<evidence type="ECO:0000250" key="1"/>
<evidence type="ECO:0000250" key="2">
    <source>
        <dbReference type="UniProtKB" id="P05177"/>
    </source>
</evidence>
<evidence type="ECO:0000305" key="3"/>
<dbReference type="EC" id="1.14.14.1" evidence="2"/>
<dbReference type="EC" id="4.2.1.152" evidence="2"/>
<dbReference type="EMBL" id="D86475">
    <property type="protein sequence ID" value="BAA33790.1"/>
    <property type="molecule type" value="mRNA"/>
</dbReference>
<dbReference type="RefSeq" id="NP_001191363.1">
    <property type="nucleotide sequence ID" value="NM_001204434.1"/>
</dbReference>
<dbReference type="SMR" id="O77810"/>
<dbReference type="FunCoup" id="O77810">
    <property type="interactions" value="207"/>
</dbReference>
<dbReference type="STRING" id="9483.ENSCJAP00000032736"/>
<dbReference type="GlyCosmos" id="O77810">
    <property type="glycosylation" value="1 site, No reported glycans"/>
</dbReference>
<dbReference type="GeneID" id="100392712"/>
<dbReference type="KEGG" id="cjc:100392712"/>
<dbReference type="CTD" id="1544"/>
<dbReference type="eggNOG" id="KOG0156">
    <property type="taxonomic scope" value="Eukaryota"/>
</dbReference>
<dbReference type="InParanoid" id="O77810"/>
<dbReference type="OrthoDB" id="1055148at2759"/>
<dbReference type="UniPathway" id="UPA00296"/>
<dbReference type="UniPathway" id="UPA00383"/>
<dbReference type="UniPathway" id="UPA00912"/>
<dbReference type="Proteomes" id="UP000008225">
    <property type="component" value="Unplaced"/>
</dbReference>
<dbReference type="GO" id="GO:0005789">
    <property type="term" value="C:endoplasmic reticulum membrane"/>
    <property type="evidence" value="ECO:0007669"/>
    <property type="project" value="UniProtKB-SubCell"/>
</dbReference>
<dbReference type="GO" id="GO:0101020">
    <property type="term" value="F:estrogen 16-alpha-hydroxylase activity"/>
    <property type="evidence" value="ECO:0000250"/>
    <property type="project" value="UniProtKB"/>
</dbReference>
<dbReference type="GO" id="GO:0101021">
    <property type="term" value="F:estrogen 2-hydroxylase activity"/>
    <property type="evidence" value="ECO:0000250"/>
    <property type="project" value="UniProtKB"/>
</dbReference>
<dbReference type="GO" id="GO:0020037">
    <property type="term" value="F:heme binding"/>
    <property type="evidence" value="ECO:0000250"/>
    <property type="project" value="UniProtKB"/>
</dbReference>
<dbReference type="GO" id="GO:0106256">
    <property type="term" value="F:hydroperoxy icosatetraenoate dehydratase activity"/>
    <property type="evidence" value="ECO:0007669"/>
    <property type="project" value="UniProtKB-EC"/>
</dbReference>
<dbReference type="GO" id="GO:0005506">
    <property type="term" value="F:iron ion binding"/>
    <property type="evidence" value="ECO:0007669"/>
    <property type="project" value="InterPro"/>
</dbReference>
<dbReference type="GO" id="GO:0004508">
    <property type="term" value="F:steroid 17-alpha-monooxygenase activity"/>
    <property type="evidence" value="ECO:0007669"/>
    <property type="project" value="TreeGrafter"/>
</dbReference>
<dbReference type="GO" id="GO:0019369">
    <property type="term" value="P:arachidonate metabolic process"/>
    <property type="evidence" value="ECO:0007669"/>
    <property type="project" value="UniProtKB-UniPathway"/>
</dbReference>
<dbReference type="GO" id="GO:0008203">
    <property type="term" value="P:cholesterol metabolic process"/>
    <property type="evidence" value="ECO:0007669"/>
    <property type="project" value="UniProtKB-UniPathway"/>
</dbReference>
<dbReference type="GO" id="GO:0008210">
    <property type="term" value="P:estrogen metabolic process"/>
    <property type="evidence" value="ECO:0000250"/>
    <property type="project" value="UniProtKB"/>
</dbReference>
<dbReference type="GO" id="GO:0042446">
    <property type="term" value="P:hormone biosynthetic process"/>
    <property type="evidence" value="ECO:0007669"/>
    <property type="project" value="TreeGrafter"/>
</dbReference>
<dbReference type="GO" id="GO:0042448">
    <property type="term" value="P:progesterone metabolic process"/>
    <property type="evidence" value="ECO:0007669"/>
    <property type="project" value="TreeGrafter"/>
</dbReference>
<dbReference type="GO" id="GO:0042572">
    <property type="term" value="P:retinol metabolic process"/>
    <property type="evidence" value="ECO:0000250"/>
    <property type="project" value="UniProtKB"/>
</dbReference>
<dbReference type="CDD" id="cd20676">
    <property type="entry name" value="CYP1A"/>
    <property type="match status" value="1"/>
</dbReference>
<dbReference type="FunFam" id="1.10.630.10:FF:000002">
    <property type="entry name" value="Cytochrome P450 1A1"/>
    <property type="match status" value="1"/>
</dbReference>
<dbReference type="Gene3D" id="1.10.630.10">
    <property type="entry name" value="Cytochrome P450"/>
    <property type="match status" value="1"/>
</dbReference>
<dbReference type="InterPro" id="IPR001128">
    <property type="entry name" value="Cyt_P450"/>
</dbReference>
<dbReference type="InterPro" id="IPR017972">
    <property type="entry name" value="Cyt_P450_CS"/>
</dbReference>
<dbReference type="InterPro" id="IPR002401">
    <property type="entry name" value="Cyt_P450_E_grp-I"/>
</dbReference>
<dbReference type="InterPro" id="IPR008066">
    <property type="entry name" value="Cyt_P450_E_grp-I_CYP1"/>
</dbReference>
<dbReference type="InterPro" id="IPR036396">
    <property type="entry name" value="Cyt_P450_sf"/>
</dbReference>
<dbReference type="PANTHER" id="PTHR24289:SF21">
    <property type="entry name" value="CYTOCHROME P450 1A"/>
    <property type="match status" value="1"/>
</dbReference>
<dbReference type="PANTHER" id="PTHR24289">
    <property type="entry name" value="STEROID 17-ALPHA-HYDROXYLASE/17,20 LYASE"/>
    <property type="match status" value="1"/>
</dbReference>
<dbReference type="Pfam" id="PF00067">
    <property type="entry name" value="p450"/>
    <property type="match status" value="1"/>
</dbReference>
<dbReference type="PRINTS" id="PR00463">
    <property type="entry name" value="EP450I"/>
</dbReference>
<dbReference type="PRINTS" id="PR01683">
    <property type="entry name" value="EP450ICYP1A"/>
</dbReference>
<dbReference type="PRINTS" id="PR00385">
    <property type="entry name" value="P450"/>
</dbReference>
<dbReference type="SUPFAM" id="SSF48264">
    <property type="entry name" value="Cytochrome P450"/>
    <property type="match status" value="1"/>
</dbReference>
<dbReference type="PROSITE" id="PS00086">
    <property type="entry name" value="CYTOCHROME_P450"/>
    <property type="match status" value="1"/>
</dbReference>
<gene>
    <name type="primary">CYP1A2</name>
</gene>